<evidence type="ECO:0000255" key="1">
    <source>
        <dbReference type="HAMAP-Rule" id="MF_01454"/>
    </source>
</evidence>
<evidence type="ECO:0000255" key="2">
    <source>
        <dbReference type="PROSITE-ProRule" id="PRU01229"/>
    </source>
</evidence>
<evidence type="ECO:0000255" key="3">
    <source>
        <dbReference type="PROSITE-ProRule" id="PRU01231"/>
    </source>
</evidence>
<reference key="1">
    <citation type="submission" date="2008-08" db="EMBL/GenBank/DDBJ databases">
        <title>The complete genome sequence of Coprothermobacter proteolyticus strain ATCC 5245 / DSM 5265 / BT.</title>
        <authorList>
            <person name="Dodson R.J."/>
            <person name="Durkin A.S."/>
            <person name="Wu M."/>
            <person name="Eisen J."/>
            <person name="Sutton G."/>
        </authorList>
    </citation>
    <scope>NUCLEOTIDE SEQUENCE [LARGE SCALE GENOMIC DNA]</scope>
    <source>
        <strain>ATCC 35245 / DSM 5265 / OCM 4 / BT</strain>
    </source>
</reference>
<keyword id="KW-0963">Cytoplasm</keyword>
<keyword id="KW-0342">GTP-binding</keyword>
<keyword id="KW-0378">Hydrolase</keyword>
<keyword id="KW-0460">Magnesium</keyword>
<keyword id="KW-0479">Metal-binding</keyword>
<keyword id="KW-0547">Nucleotide-binding</keyword>
<keyword id="KW-1185">Reference proteome</keyword>
<sequence>MIFIDTAEIIVYGGKGGDGAASFRREKFIEKGGPDGGDGGKGGDVYLVTDPALLTLYDFKYQKEFRAEDGEPGRSQKQFGKDGKDLFIRIPVGVIVADLETQTVVDMDKPGMKLLVARGGRGGKGNARMATATRRAPRFRELGHEGEMRRLRLELKLVAHVGLVGLPNAGKSSLISVISKAKPEIAPYPFTTRSPVLGIVKKAEQSFVVSDVPGLIEGAHEGKGLGLTFLRHVERTKVLAIVIDAAAIDGYEPMQAYETIIGELRAYNPNLLEKPRVLVLNKIDLLQPEHIDQLKVQFADKESHVVLTSAATGEGTNQLVDVLFELISPTLSTEEPTAEFMTMELPPLPEDFSIRREDEYWVVEGRWARYISRYDTTQPWDFQYVQREIRRKKLEEMLRQMGAKEGETVVIHDKAFEIL</sequence>
<comment type="function">
    <text evidence="1">An essential GTPase which binds GTP, GDP and possibly (p)ppGpp with moderate affinity, with high nucleotide exchange rates and a fairly low GTP hydrolysis rate. Plays a role in control of the cell cycle, stress response, ribosome biogenesis and in those bacteria that undergo differentiation, in morphogenesis control.</text>
</comment>
<comment type="cofactor">
    <cofactor evidence="1">
        <name>Mg(2+)</name>
        <dbReference type="ChEBI" id="CHEBI:18420"/>
    </cofactor>
</comment>
<comment type="subunit">
    <text evidence="1">Monomer.</text>
</comment>
<comment type="subcellular location">
    <subcellularLocation>
        <location evidence="1">Cytoplasm</location>
    </subcellularLocation>
</comment>
<comment type="similarity">
    <text evidence="1">Belongs to the TRAFAC class OBG-HflX-like GTPase superfamily. OBG GTPase family.</text>
</comment>
<proteinExistence type="inferred from homology"/>
<name>OBG_COPPD</name>
<gene>
    <name evidence="1" type="primary">obg</name>
    <name type="ordered locus">COPRO5265_0546</name>
</gene>
<organism>
    <name type="scientific">Coprothermobacter proteolyticus (strain ATCC 35245 / DSM 5265 / OCM 4 / BT)</name>
    <dbReference type="NCBI Taxonomy" id="309798"/>
    <lineage>
        <taxon>Bacteria</taxon>
        <taxon>Pseudomonadati</taxon>
        <taxon>Coprothermobacterota</taxon>
        <taxon>Coprothermobacteria</taxon>
        <taxon>Coprothermobacterales</taxon>
        <taxon>Coprothermobacteraceae</taxon>
        <taxon>Coprothermobacter</taxon>
    </lineage>
</organism>
<accession>B5Y805</accession>
<feature type="chain" id="PRO_0000385857" description="GTPase Obg">
    <location>
        <begin position="1"/>
        <end position="419"/>
    </location>
</feature>
<feature type="domain" description="Obg" evidence="3">
    <location>
        <begin position="1"/>
        <end position="158"/>
    </location>
</feature>
<feature type="domain" description="OBG-type G" evidence="1">
    <location>
        <begin position="159"/>
        <end position="328"/>
    </location>
</feature>
<feature type="domain" description="OCT" evidence="2">
    <location>
        <begin position="344"/>
        <end position="419"/>
    </location>
</feature>
<feature type="binding site" evidence="1">
    <location>
        <begin position="165"/>
        <end position="172"/>
    </location>
    <ligand>
        <name>GTP</name>
        <dbReference type="ChEBI" id="CHEBI:37565"/>
    </ligand>
</feature>
<feature type="binding site" evidence="1">
    <location>
        <position position="172"/>
    </location>
    <ligand>
        <name>Mg(2+)</name>
        <dbReference type="ChEBI" id="CHEBI:18420"/>
    </ligand>
</feature>
<feature type="binding site" evidence="1">
    <location>
        <begin position="190"/>
        <end position="194"/>
    </location>
    <ligand>
        <name>GTP</name>
        <dbReference type="ChEBI" id="CHEBI:37565"/>
    </ligand>
</feature>
<feature type="binding site" evidence="1">
    <location>
        <position position="192"/>
    </location>
    <ligand>
        <name>Mg(2+)</name>
        <dbReference type="ChEBI" id="CHEBI:18420"/>
    </ligand>
</feature>
<feature type="binding site" evidence="1">
    <location>
        <begin position="211"/>
        <end position="214"/>
    </location>
    <ligand>
        <name>GTP</name>
        <dbReference type="ChEBI" id="CHEBI:37565"/>
    </ligand>
</feature>
<feature type="binding site" evidence="1">
    <location>
        <begin position="281"/>
        <end position="284"/>
    </location>
    <ligand>
        <name>GTP</name>
        <dbReference type="ChEBI" id="CHEBI:37565"/>
    </ligand>
</feature>
<feature type="binding site" evidence="1">
    <location>
        <begin position="309"/>
        <end position="311"/>
    </location>
    <ligand>
        <name>GTP</name>
        <dbReference type="ChEBI" id="CHEBI:37565"/>
    </ligand>
</feature>
<protein>
    <recommendedName>
        <fullName evidence="1">GTPase Obg</fullName>
        <ecNumber evidence="1">3.6.5.-</ecNumber>
    </recommendedName>
    <alternativeName>
        <fullName evidence="1">GTP-binding protein Obg</fullName>
    </alternativeName>
</protein>
<dbReference type="EC" id="3.6.5.-" evidence="1"/>
<dbReference type="EMBL" id="CP001145">
    <property type="protein sequence ID" value="ACI18082.1"/>
    <property type="molecule type" value="Genomic_DNA"/>
</dbReference>
<dbReference type="RefSeq" id="WP_012544732.1">
    <property type="nucleotide sequence ID" value="NC_011295.1"/>
</dbReference>
<dbReference type="SMR" id="B5Y805"/>
<dbReference type="STRING" id="309798.COPRO5265_0546"/>
<dbReference type="KEGG" id="cpo:COPRO5265_0546"/>
<dbReference type="eggNOG" id="COG0536">
    <property type="taxonomic scope" value="Bacteria"/>
</dbReference>
<dbReference type="OrthoDB" id="9807318at2"/>
<dbReference type="Proteomes" id="UP000001732">
    <property type="component" value="Chromosome"/>
</dbReference>
<dbReference type="GO" id="GO:0005737">
    <property type="term" value="C:cytoplasm"/>
    <property type="evidence" value="ECO:0007669"/>
    <property type="project" value="UniProtKB-SubCell"/>
</dbReference>
<dbReference type="GO" id="GO:0005525">
    <property type="term" value="F:GTP binding"/>
    <property type="evidence" value="ECO:0007669"/>
    <property type="project" value="UniProtKB-UniRule"/>
</dbReference>
<dbReference type="GO" id="GO:0003924">
    <property type="term" value="F:GTPase activity"/>
    <property type="evidence" value="ECO:0007669"/>
    <property type="project" value="UniProtKB-UniRule"/>
</dbReference>
<dbReference type="GO" id="GO:0000287">
    <property type="term" value="F:magnesium ion binding"/>
    <property type="evidence" value="ECO:0007669"/>
    <property type="project" value="InterPro"/>
</dbReference>
<dbReference type="GO" id="GO:0042254">
    <property type="term" value="P:ribosome biogenesis"/>
    <property type="evidence" value="ECO:0007669"/>
    <property type="project" value="UniProtKB-UniRule"/>
</dbReference>
<dbReference type="CDD" id="cd01898">
    <property type="entry name" value="Obg"/>
    <property type="match status" value="1"/>
</dbReference>
<dbReference type="FunFam" id="2.70.210.12:FF:000001">
    <property type="entry name" value="GTPase Obg"/>
    <property type="match status" value="1"/>
</dbReference>
<dbReference type="Gene3D" id="3.30.300.350">
    <property type="entry name" value="GTP-binding protein OBG, C-terminal domain"/>
    <property type="match status" value="1"/>
</dbReference>
<dbReference type="Gene3D" id="2.70.210.12">
    <property type="entry name" value="GTP1/OBG domain"/>
    <property type="match status" value="1"/>
</dbReference>
<dbReference type="Gene3D" id="3.40.50.300">
    <property type="entry name" value="P-loop containing nucleotide triphosphate hydrolases"/>
    <property type="match status" value="1"/>
</dbReference>
<dbReference type="HAMAP" id="MF_01454">
    <property type="entry name" value="GTPase_Obg"/>
    <property type="match status" value="1"/>
</dbReference>
<dbReference type="InterPro" id="IPR031167">
    <property type="entry name" value="G_OBG"/>
</dbReference>
<dbReference type="InterPro" id="IPR006073">
    <property type="entry name" value="GTP-bd"/>
</dbReference>
<dbReference type="InterPro" id="IPR014100">
    <property type="entry name" value="GTP-bd_Obg/CgtA"/>
</dbReference>
<dbReference type="InterPro" id="IPR036346">
    <property type="entry name" value="GTP-bd_prot_GTP1/OBG_C_sf"/>
</dbReference>
<dbReference type="InterPro" id="IPR006074">
    <property type="entry name" value="GTP1-OBG_CS"/>
</dbReference>
<dbReference type="InterPro" id="IPR006169">
    <property type="entry name" value="GTP1_OBG_dom"/>
</dbReference>
<dbReference type="InterPro" id="IPR036726">
    <property type="entry name" value="GTP1_OBG_dom_sf"/>
</dbReference>
<dbReference type="InterPro" id="IPR045086">
    <property type="entry name" value="OBG_GTPase"/>
</dbReference>
<dbReference type="InterPro" id="IPR015349">
    <property type="entry name" value="OCT_dom"/>
</dbReference>
<dbReference type="InterPro" id="IPR027417">
    <property type="entry name" value="P-loop_NTPase"/>
</dbReference>
<dbReference type="InterPro" id="IPR005225">
    <property type="entry name" value="Small_GTP-bd"/>
</dbReference>
<dbReference type="NCBIfam" id="TIGR02729">
    <property type="entry name" value="Obg_CgtA"/>
    <property type="match status" value="1"/>
</dbReference>
<dbReference type="NCBIfam" id="NF008954">
    <property type="entry name" value="PRK12296.1"/>
    <property type="match status" value="1"/>
</dbReference>
<dbReference type="NCBIfam" id="NF008955">
    <property type="entry name" value="PRK12297.1"/>
    <property type="match status" value="1"/>
</dbReference>
<dbReference type="NCBIfam" id="NF008956">
    <property type="entry name" value="PRK12299.1"/>
    <property type="match status" value="1"/>
</dbReference>
<dbReference type="NCBIfam" id="TIGR00231">
    <property type="entry name" value="small_GTP"/>
    <property type="match status" value="1"/>
</dbReference>
<dbReference type="PANTHER" id="PTHR11702">
    <property type="entry name" value="DEVELOPMENTALLY REGULATED GTP-BINDING PROTEIN-RELATED"/>
    <property type="match status" value="1"/>
</dbReference>
<dbReference type="PANTHER" id="PTHR11702:SF31">
    <property type="entry name" value="MITOCHONDRIAL RIBOSOME-ASSOCIATED GTPASE 2"/>
    <property type="match status" value="1"/>
</dbReference>
<dbReference type="Pfam" id="PF09269">
    <property type="entry name" value="DUF1967"/>
    <property type="match status" value="1"/>
</dbReference>
<dbReference type="Pfam" id="PF01018">
    <property type="entry name" value="GTP1_OBG"/>
    <property type="match status" value="1"/>
</dbReference>
<dbReference type="Pfam" id="PF01926">
    <property type="entry name" value="MMR_HSR1"/>
    <property type="match status" value="1"/>
</dbReference>
<dbReference type="PRINTS" id="PR00326">
    <property type="entry name" value="GTP1OBG"/>
</dbReference>
<dbReference type="SUPFAM" id="SSF102741">
    <property type="entry name" value="Obg GTP-binding protein C-terminal domain"/>
    <property type="match status" value="1"/>
</dbReference>
<dbReference type="SUPFAM" id="SSF82051">
    <property type="entry name" value="Obg GTP-binding protein N-terminal domain"/>
    <property type="match status" value="1"/>
</dbReference>
<dbReference type="SUPFAM" id="SSF52540">
    <property type="entry name" value="P-loop containing nucleoside triphosphate hydrolases"/>
    <property type="match status" value="1"/>
</dbReference>
<dbReference type="PROSITE" id="PS51710">
    <property type="entry name" value="G_OBG"/>
    <property type="match status" value="1"/>
</dbReference>
<dbReference type="PROSITE" id="PS00905">
    <property type="entry name" value="GTP1_OBG"/>
    <property type="match status" value="1"/>
</dbReference>
<dbReference type="PROSITE" id="PS51883">
    <property type="entry name" value="OBG"/>
    <property type="match status" value="1"/>
</dbReference>
<dbReference type="PROSITE" id="PS51881">
    <property type="entry name" value="OCT"/>
    <property type="match status" value="1"/>
</dbReference>